<protein>
    <recommendedName>
        <fullName evidence="1">Large ribosomal subunit protein bL31B</fullName>
    </recommendedName>
    <alternativeName>
        <fullName evidence="2">50S ribosomal protein L31 type B</fullName>
    </alternativeName>
</protein>
<accession>Q81JW9</accession>
<accession>Q6HQG9</accession>
<accession>Q6KJU3</accession>
<feature type="chain" id="PRO_0000173194" description="Large ribosomal subunit protein bL31B">
    <location>
        <begin position="1"/>
        <end position="81"/>
    </location>
</feature>
<proteinExistence type="inferred from homology"/>
<reference key="1">
    <citation type="journal article" date="2003" name="Nature">
        <title>The genome sequence of Bacillus anthracis Ames and comparison to closely related bacteria.</title>
        <authorList>
            <person name="Read T.D."/>
            <person name="Peterson S.N."/>
            <person name="Tourasse N.J."/>
            <person name="Baillie L.W."/>
            <person name="Paulsen I.T."/>
            <person name="Nelson K.E."/>
            <person name="Tettelin H."/>
            <person name="Fouts D.E."/>
            <person name="Eisen J.A."/>
            <person name="Gill S.R."/>
            <person name="Holtzapple E.K."/>
            <person name="Okstad O.A."/>
            <person name="Helgason E."/>
            <person name="Rilstone J."/>
            <person name="Wu M."/>
            <person name="Kolonay J.F."/>
            <person name="Beanan M.J."/>
            <person name="Dodson R.J."/>
            <person name="Brinkac L.M."/>
            <person name="Gwinn M.L."/>
            <person name="DeBoy R.T."/>
            <person name="Madpu R."/>
            <person name="Daugherty S.C."/>
            <person name="Durkin A.S."/>
            <person name="Haft D.H."/>
            <person name="Nelson W.C."/>
            <person name="Peterson J.D."/>
            <person name="Pop M."/>
            <person name="Khouri H.M."/>
            <person name="Radune D."/>
            <person name="Benton J.L."/>
            <person name="Mahamoud Y."/>
            <person name="Jiang L."/>
            <person name="Hance I.R."/>
            <person name="Weidman J.F."/>
            <person name="Berry K.J."/>
            <person name="Plaut R.D."/>
            <person name="Wolf A.M."/>
            <person name="Watkins K.L."/>
            <person name="Nierman W.C."/>
            <person name="Hazen A."/>
            <person name="Cline R.T."/>
            <person name="Redmond C."/>
            <person name="Thwaite J.E."/>
            <person name="White O."/>
            <person name="Salzberg S.L."/>
            <person name="Thomason B."/>
            <person name="Friedlander A.M."/>
            <person name="Koehler T.M."/>
            <person name="Hanna P.C."/>
            <person name="Kolstoe A.-B."/>
            <person name="Fraser C.M."/>
        </authorList>
    </citation>
    <scope>NUCLEOTIDE SEQUENCE [LARGE SCALE GENOMIC DNA]</scope>
    <source>
        <strain>Ames / isolate Porton</strain>
    </source>
</reference>
<reference key="2">
    <citation type="journal article" date="2009" name="J. Bacteriol.">
        <title>The complete genome sequence of Bacillus anthracis Ames 'Ancestor'.</title>
        <authorList>
            <person name="Ravel J."/>
            <person name="Jiang L."/>
            <person name="Stanley S.T."/>
            <person name="Wilson M.R."/>
            <person name="Decker R.S."/>
            <person name="Read T.D."/>
            <person name="Worsham P."/>
            <person name="Keim P.S."/>
            <person name="Salzberg S.L."/>
            <person name="Fraser-Liggett C.M."/>
            <person name="Rasko D.A."/>
        </authorList>
    </citation>
    <scope>NUCLEOTIDE SEQUENCE [LARGE SCALE GENOMIC DNA]</scope>
    <source>
        <strain>Ames ancestor</strain>
    </source>
</reference>
<reference key="3">
    <citation type="submission" date="2004-01" db="EMBL/GenBank/DDBJ databases">
        <title>Complete genome sequence of Bacillus anthracis Sterne.</title>
        <authorList>
            <person name="Brettin T.S."/>
            <person name="Bruce D."/>
            <person name="Challacombe J.F."/>
            <person name="Gilna P."/>
            <person name="Han C."/>
            <person name="Hill K."/>
            <person name="Hitchcock P."/>
            <person name="Jackson P."/>
            <person name="Keim P."/>
            <person name="Longmire J."/>
            <person name="Lucas S."/>
            <person name="Okinaka R."/>
            <person name="Richardson P."/>
            <person name="Rubin E."/>
            <person name="Tice H."/>
        </authorList>
    </citation>
    <scope>NUCLEOTIDE SEQUENCE [LARGE SCALE GENOMIC DNA]</scope>
    <source>
        <strain>Sterne</strain>
    </source>
</reference>
<evidence type="ECO:0000255" key="1">
    <source>
        <dbReference type="HAMAP-Rule" id="MF_00502"/>
    </source>
</evidence>
<evidence type="ECO:0000305" key="2"/>
<gene>
    <name evidence="1" type="primary">rpmE2</name>
    <name type="synonym">rpmE</name>
    <name type="ordered locus">BA_5574</name>
    <name type="ordered locus">GBAA_5574</name>
    <name type="ordered locus">BAS5180</name>
</gene>
<organism>
    <name type="scientific">Bacillus anthracis</name>
    <dbReference type="NCBI Taxonomy" id="1392"/>
    <lineage>
        <taxon>Bacteria</taxon>
        <taxon>Bacillati</taxon>
        <taxon>Bacillota</taxon>
        <taxon>Bacilli</taxon>
        <taxon>Bacillales</taxon>
        <taxon>Bacillaceae</taxon>
        <taxon>Bacillus</taxon>
        <taxon>Bacillus cereus group</taxon>
    </lineage>
</organism>
<keyword id="KW-1185">Reference proteome</keyword>
<keyword id="KW-0687">Ribonucleoprotein</keyword>
<keyword id="KW-0689">Ribosomal protein</keyword>
<comment type="subunit">
    <text evidence="1">Part of the 50S ribosomal subunit.</text>
</comment>
<comment type="similarity">
    <text evidence="1">Belongs to the bacterial ribosomal protein bL31 family. Type B subfamily.</text>
</comment>
<sequence length="81" mass="9184">MKAGIHPDYKKVVFMDTNTGFKFLSGSTKGSNETVEWEDGNTYPLLKVEISSDSHPFYTGRQKFATADGRVDRFNKKYGLK</sequence>
<name>RL31B_BACAN</name>
<dbReference type="EMBL" id="AE016879">
    <property type="protein sequence ID" value="AAP29217.1"/>
    <property type="molecule type" value="Genomic_DNA"/>
</dbReference>
<dbReference type="EMBL" id="AE017334">
    <property type="protein sequence ID" value="AAT34717.1"/>
    <property type="molecule type" value="Genomic_DNA"/>
</dbReference>
<dbReference type="EMBL" id="AE017225">
    <property type="protein sequence ID" value="AAT57469.1"/>
    <property type="molecule type" value="Genomic_DNA"/>
</dbReference>
<dbReference type="RefSeq" id="NP_847731.1">
    <property type="nucleotide sequence ID" value="NC_003997.3"/>
</dbReference>
<dbReference type="RefSeq" id="WP_000643433.1">
    <property type="nucleotide sequence ID" value="NZ_WXXJ01000038.1"/>
</dbReference>
<dbReference type="RefSeq" id="YP_031419.1">
    <property type="nucleotide sequence ID" value="NC_005945.1"/>
</dbReference>
<dbReference type="SMR" id="Q81JW9"/>
<dbReference type="STRING" id="261594.GBAA_5574"/>
<dbReference type="DNASU" id="1085269"/>
<dbReference type="KEGG" id="ban:BA_5574"/>
<dbReference type="KEGG" id="bar:GBAA_5574"/>
<dbReference type="KEGG" id="bat:BAS5180"/>
<dbReference type="PATRIC" id="fig|198094.11.peg.5533"/>
<dbReference type="eggNOG" id="COG0254">
    <property type="taxonomic scope" value="Bacteria"/>
</dbReference>
<dbReference type="HOGENOM" id="CLU_114306_2_2_9"/>
<dbReference type="OMA" id="YRLVAFK"/>
<dbReference type="OrthoDB" id="9803251at2"/>
<dbReference type="Proteomes" id="UP000000427">
    <property type="component" value="Chromosome"/>
</dbReference>
<dbReference type="Proteomes" id="UP000000594">
    <property type="component" value="Chromosome"/>
</dbReference>
<dbReference type="GO" id="GO:1990904">
    <property type="term" value="C:ribonucleoprotein complex"/>
    <property type="evidence" value="ECO:0007669"/>
    <property type="project" value="UniProtKB-KW"/>
</dbReference>
<dbReference type="GO" id="GO:0005840">
    <property type="term" value="C:ribosome"/>
    <property type="evidence" value="ECO:0007669"/>
    <property type="project" value="UniProtKB-KW"/>
</dbReference>
<dbReference type="GO" id="GO:0003735">
    <property type="term" value="F:structural constituent of ribosome"/>
    <property type="evidence" value="ECO:0007669"/>
    <property type="project" value="InterPro"/>
</dbReference>
<dbReference type="GO" id="GO:0006412">
    <property type="term" value="P:translation"/>
    <property type="evidence" value="ECO:0007669"/>
    <property type="project" value="UniProtKB-UniRule"/>
</dbReference>
<dbReference type="Gene3D" id="4.10.830.30">
    <property type="entry name" value="Ribosomal protein L31"/>
    <property type="match status" value="1"/>
</dbReference>
<dbReference type="HAMAP" id="MF_00502">
    <property type="entry name" value="Ribosomal_bL31_2"/>
    <property type="match status" value="1"/>
</dbReference>
<dbReference type="InterPro" id="IPR034704">
    <property type="entry name" value="Ribosomal_bL28/bL31-like_sf"/>
</dbReference>
<dbReference type="InterPro" id="IPR002150">
    <property type="entry name" value="Ribosomal_bL31"/>
</dbReference>
<dbReference type="InterPro" id="IPR027493">
    <property type="entry name" value="Ribosomal_bL31_B"/>
</dbReference>
<dbReference type="InterPro" id="IPR042105">
    <property type="entry name" value="Ribosomal_bL31_sf"/>
</dbReference>
<dbReference type="NCBIfam" id="TIGR00105">
    <property type="entry name" value="L31"/>
    <property type="match status" value="1"/>
</dbReference>
<dbReference type="NCBIfam" id="NF002462">
    <property type="entry name" value="PRK01678.1"/>
    <property type="match status" value="1"/>
</dbReference>
<dbReference type="PANTHER" id="PTHR33280">
    <property type="entry name" value="50S RIBOSOMAL PROTEIN L31, CHLOROPLASTIC"/>
    <property type="match status" value="1"/>
</dbReference>
<dbReference type="PANTHER" id="PTHR33280:SF1">
    <property type="entry name" value="LARGE RIBOSOMAL SUBUNIT PROTEIN BL31C"/>
    <property type="match status" value="1"/>
</dbReference>
<dbReference type="Pfam" id="PF01197">
    <property type="entry name" value="Ribosomal_L31"/>
    <property type="match status" value="1"/>
</dbReference>
<dbReference type="PRINTS" id="PR01249">
    <property type="entry name" value="RIBOSOMALL31"/>
</dbReference>
<dbReference type="SUPFAM" id="SSF143800">
    <property type="entry name" value="L28p-like"/>
    <property type="match status" value="1"/>
</dbReference>
<dbReference type="PROSITE" id="PS01143">
    <property type="entry name" value="RIBOSOMAL_L31"/>
    <property type="match status" value="1"/>
</dbReference>